<feature type="chain" id="PRO_0000402133" description="(E)-beta-farnesene synthase">
    <location>
        <begin position="1"/>
        <end position="533"/>
    </location>
</feature>
<feature type="short sequence motif" description="DDXXD motif">
    <location>
        <begin position="286"/>
        <end position="290"/>
    </location>
</feature>
<feature type="binding site" evidence="2">
    <location>
        <position position="286"/>
    </location>
    <ligand>
        <name>Mg(2+)</name>
        <dbReference type="ChEBI" id="CHEBI:18420"/>
        <label>1</label>
    </ligand>
</feature>
<feature type="binding site" evidence="2">
    <location>
        <position position="286"/>
    </location>
    <ligand>
        <name>Mg(2+)</name>
        <dbReference type="ChEBI" id="CHEBI:18420"/>
        <label>2</label>
    </ligand>
</feature>
<feature type="binding site" evidence="2">
    <location>
        <position position="290"/>
    </location>
    <ligand>
        <name>Mg(2+)</name>
        <dbReference type="ChEBI" id="CHEBI:18420"/>
        <label>1</label>
    </ligand>
</feature>
<feature type="binding site" evidence="2">
    <location>
        <position position="290"/>
    </location>
    <ligand>
        <name>Mg(2+)</name>
        <dbReference type="ChEBI" id="CHEBI:18420"/>
        <label>2</label>
    </ligand>
</feature>
<feature type="binding site" evidence="2">
    <location>
        <position position="430"/>
    </location>
    <ligand>
        <name>Mg(2+)</name>
        <dbReference type="ChEBI" id="CHEBI:18420"/>
        <label>3</label>
    </ligand>
</feature>
<feature type="binding site" evidence="2">
    <location>
        <position position="434"/>
    </location>
    <ligand>
        <name>Mg(2+)</name>
        <dbReference type="ChEBI" id="CHEBI:18420"/>
        <label>3</label>
    </ligand>
</feature>
<feature type="binding site" evidence="2">
    <location>
        <position position="438"/>
    </location>
    <ligand>
        <name>Mg(2+)</name>
        <dbReference type="ChEBI" id="CHEBI:18420"/>
        <label>3</label>
    </ligand>
</feature>
<accession>C7E5W0</accession>
<keyword id="KW-0963">Cytoplasm</keyword>
<keyword id="KW-0456">Lyase</keyword>
<keyword id="KW-0460">Magnesium</keyword>
<keyword id="KW-0464">Manganese</keyword>
<keyword id="KW-0479">Metal-binding</keyword>
<keyword id="KW-0611">Plant defense</keyword>
<dbReference type="EC" id="4.2.3.47"/>
<dbReference type="EMBL" id="GQ253107">
    <property type="protein sequence ID" value="ACT37406.1"/>
    <property type="molecule type" value="mRNA"/>
</dbReference>
<dbReference type="SMR" id="C7E5W0"/>
<dbReference type="BRENDA" id="4.2.3.47">
    <property type="organism ID" value="11311"/>
</dbReference>
<dbReference type="UniPathway" id="UPA00213"/>
<dbReference type="GO" id="GO:0005737">
    <property type="term" value="C:cytoplasm"/>
    <property type="evidence" value="ECO:0007669"/>
    <property type="project" value="UniProtKB-SubCell"/>
</dbReference>
<dbReference type="GO" id="GO:0000287">
    <property type="term" value="F:magnesium ion binding"/>
    <property type="evidence" value="ECO:0007669"/>
    <property type="project" value="InterPro"/>
</dbReference>
<dbReference type="GO" id="GO:0010333">
    <property type="term" value="F:terpene synthase activity"/>
    <property type="evidence" value="ECO:0007669"/>
    <property type="project" value="InterPro"/>
</dbReference>
<dbReference type="GO" id="GO:0006952">
    <property type="term" value="P:defense response"/>
    <property type="evidence" value="ECO:0007669"/>
    <property type="project" value="UniProtKB-KW"/>
</dbReference>
<dbReference type="GO" id="GO:0016102">
    <property type="term" value="P:diterpenoid biosynthetic process"/>
    <property type="evidence" value="ECO:0007669"/>
    <property type="project" value="InterPro"/>
</dbReference>
<dbReference type="CDD" id="cd00684">
    <property type="entry name" value="Terpene_cyclase_plant_C1"/>
    <property type="match status" value="1"/>
</dbReference>
<dbReference type="FunFam" id="1.10.600.10:FF:000007">
    <property type="entry name" value="Isoprene synthase, chloroplastic"/>
    <property type="match status" value="1"/>
</dbReference>
<dbReference type="Gene3D" id="1.10.600.10">
    <property type="entry name" value="Farnesyl Diphosphate Synthase"/>
    <property type="match status" value="1"/>
</dbReference>
<dbReference type="Gene3D" id="1.50.10.130">
    <property type="entry name" value="Terpene synthase, N-terminal domain"/>
    <property type="match status" value="1"/>
</dbReference>
<dbReference type="InterPro" id="IPR008949">
    <property type="entry name" value="Isoprenoid_synthase_dom_sf"/>
</dbReference>
<dbReference type="InterPro" id="IPR034741">
    <property type="entry name" value="Terpene_cyclase-like_1_C"/>
</dbReference>
<dbReference type="InterPro" id="IPR044814">
    <property type="entry name" value="Terpene_cyclase_plant_C1"/>
</dbReference>
<dbReference type="InterPro" id="IPR001906">
    <property type="entry name" value="Terpene_synth_N"/>
</dbReference>
<dbReference type="InterPro" id="IPR036965">
    <property type="entry name" value="Terpene_synth_N_sf"/>
</dbReference>
<dbReference type="InterPro" id="IPR050148">
    <property type="entry name" value="Terpene_synthase-like"/>
</dbReference>
<dbReference type="InterPro" id="IPR005630">
    <property type="entry name" value="Terpene_synthase_metal-bd"/>
</dbReference>
<dbReference type="InterPro" id="IPR008930">
    <property type="entry name" value="Terpenoid_cyclase/PrenylTrfase"/>
</dbReference>
<dbReference type="PANTHER" id="PTHR31225:SF118">
    <property type="entry name" value="(E)-BETA-FARNESENE SYNTHASE"/>
    <property type="match status" value="1"/>
</dbReference>
<dbReference type="PANTHER" id="PTHR31225">
    <property type="entry name" value="OS04G0344100 PROTEIN-RELATED"/>
    <property type="match status" value="1"/>
</dbReference>
<dbReference type="Pfam" id="PF01397">
    <property type="entry name" value="Terpene_synth"/>
    <property type="match status" value="1"/>
</dbReference>
<dbReference type="Pfam" id="PF03936">
    <property type="entry name" value="Terpene_synth_C"/>
    <property type="match status" value="1"/>
</dbReference>
<dbReference type="SFLD" id="SFLDS00005">
    <property type="entry name" value="Isoprenoid_Synthase_Type_I"/>
    <property type="match status" value="1"/>
</dbReference>
<dbReference type="SFLD" id="SFLDG01019">
    <property type="entry name" value="Terpene_Cyclase_Like_1_C_Termi"/>
    <property type="match status" value="1"/>
</dbReference>
<dbReference type="SUPFAM" id="SSF48239">
    <property type="entry name" value="Terpenoid cyclases/Protein prenyltransferases"/>
    <property type="match status" value="1"/>
</dbReference>
<dbReference type="SUPFAM" id="SSF48576">
    <property type="entry name" value="Terpenoid synthases"/>
    <property type="match status" value="1"/>
</dbReference>
<evidence type="ECO:0000250" key="1"/>
<evidence type="ECO:0000250" key="2">
    <source>
        <dbReference type="UniProtKB" id="Q40577"/>
    </source>
</evidence>
<evidence type="ECO:0000269" key="3">
    <source>
    </source>
</evidence>
<evidence type="ECO:0000305" key="4"/>
<sequence length="533" mass="61619">MDATAFHPSLWGDFFVKYEPPTAPKRGHMTQRAELLKEEVRKTLKAAANQIKNALDLIITLQRLGLDHHYENEISELLRFVYSSSDYDDKDLYVVSLRFYLLRKHGHRVSSDVFMSFKDEEGNFVVDDTKCLLSLYNAAYLMTHGEKVLDEAITFTRRQLEALLLDPLEPALADEVYLTLQTPLFRRLRILEAVNYIPIYGKEAGRNEAILELAKLNFNLAQLIYCEELKEVTLWWKQLNVETNLSFIRDRIVECHFWMTGACCEPRYSLSRVIATKMTALITVLDDMMDTYSTTEEAMLLAEAIYRWEENAAELLPGYMKHFYLYLLKTIDSCGGELGPNRSFRTFYLKEMLKVFVRGSSQEIKWRNENYVPKTISEHLEHSGPTVGAFQVACSSFVGMGDNITKESFEWLLTYPELVKSLMNIARLLNDTASTKREQTAGHHVSTVQCYMLKHGTTMDEACEKIKELTEDSWKDMMELYLTPTEHPKLVAQTIVDFARTADYMYKETDGFTFSHTIKDMIAKLFVDPISLF</sequence>
<comment type="function">
    <text evidence="3">Sesquiterpene cyclase catalyzing the production of sixfold more beta-farnesene than alpha-bergamotene from farnesyl diphosphate. Involved in indirect defense by producing volatile signals attracting natural enemies of herbivores.</text>
</comment>
<comment type="catalytic activity">
    <reaction evidence="3">
        <text>(2E,6E)-farnesyl diphosphate = (E)-beta-farnesene + diphosphate</text>
        <dbReference type="Rhea" id="RHEA:27425"/>
        <dbReference type="ChEBI" id="CHEBI:10418"/>
        <dbReference type="ChEBI" id="CHEBI:33019"/>
        <dbReference type="ChEBI" id="CHEBI:175763"/>
        <dbReference type="EC" id="4.2.3.47"/>
    </reaction>
</comment>
<comment type="cofactor">
    <cofactor evidence="1">
        <name>Mg(2+)</name>
        <dbReference type="ChEBI" id="CHEBI:18420"/>
    </cofactor>
    <cofactor evidence="1">
        <name>Co(2+)</name>
        <dbReference type="ChEBI" id="CHEBI:48828"/>
    </cofactor>
    <cofactor evidence="1">
        <name>Mn(2+)</name>
        <dbReference type="ChEBI" id="CHEBI:29035"/>
    </cofactor>
</comment>
<comment type="pathway">
    <text>Secondary metabolite biosynthesis; terpenoid biosynthesis.</text>
</comment>
<comment type="subcellular location">
    <subcellularLocation>
        <location evidence="4">Cytoplasm</location>
    </subcellularLocation>
</comment>
<comment type="domain">
    <text>The Asp-Asp-Xaa-Xaa-Asp/Glu (DDXXD/E) motif is important for the catalytic activity, presumably through binding to Mg(2+).</text>
</comment>
<comment type="similarity">
    <text evidence="4">Belongs to the terpene synthase family.</text>
</comment>
<name>FARS_ZEAPE</name>
<organism>
    <name type="scientific">Zea perennis</name>
    <name type="common">Perennial teosinte</name>
    <name type="synonym">Euchlaena perennis</name>
    <dbReference type="NCBI Taxonomy" id="4580"/>
    <lineage>
        <taxon>Eukaryota</taxon>
        <taxon>Viridiplantae</taxon>
        <taxon>Streptophyta</taxon>
        <taxon>Embryophyta</taxon>
        <taxon>Tracheophyta</taxon>
        <taxon>Spermatophyta</taxon>
        <taxon>Magnoliopsida</taxon>
        <taxon>Liliopsida</taxon>
        <taxon>Poales</taxon>
        <taxon>Poaceae</taxon>
        <taxon>PACMAD clade</taxon>
        <taxon>Panicoideae</taxon>
        <taxon>Andropogonodae</taxon>
        <taxon>Andropogoneae</taxon>
        <taxon>Tripsacinae</taxon>
        <taxon>Zea</taxon>
    </lineage>
</organism>
<proteinExistence type="evidence at protein level"/>
<protein>
    <recommendedName>
        <fullName>(E)-beta-farnesene synthase</fullName>
        <ecNumber>4.2.3.47</ecNumber>
    </recommendedName>
    <alternativeName>
        <fullName>Terpene synthase 10</fullName>
    </alternativeName>
</protein>
<reference key="1">
    <citation type="journal article" date="2009" name="Phytochemistry">
        <title>Molecular and biochemical evolution of maize terpene synthase 10, an enzyme of indirect defense.</title>
        <authorList>
            <person name="Koellner T.G."/>
            <person name="Gershenzon J."/>
            <person name="Degenhardt J."/>
        </authorList>
    </citation>
    <scope>NUCLEOTIDE SEQUENCE [MRNA]</scope>
    <scope>FUNCTION</scope>
    <scope>CATALYTIC ACTIVITY</scope>
</reference>